<feature type="chain" id="PRO_0000332618" description="Ribonuclease H">
    <location>
        <begin position="1"/>
        <end position="143"/>
    </location>
</feature>
<feature type="domain" description="RNase H type-1" evidence="2">
    <location>
        <begin position="1"/>
        <end position="140"/>
    </location>
</feature>
<feature type="binding site" evidence="1">
    <location>
        <position position="8"/>
    </location>
    <ligand>
        <name>Mg(2+)</name>
        <dbReference type="ChEBI" id="CHEBI:18420"/>
        <label>1</label>
    </ligand>
</feature>
<feature type="binding site" evidence="1">
    <location>
        <position position="8"/>
    </location>
    <ligand>
        <name>Mg(2+)</name>
        <dbReference type="ChEBI" id="CHEBI:18420"/>
        <label>2</label>
    </ligand>
</feature>
<feature type="binding site" evidence="1">
    <location>
        <position position="46"/>
    </location>
    <ligand>
        <name>Mg(2+)</name>
        <dbReference type="ChEBI" id="CHEBI:18420"/>
        <label>1</label>
    </ligand>
</feature>
<feature type="binding site" evidence="1">
    <location>
        <position position="68"/>
    </location>
    <ligand>
        <name>Mg(2+)</name>
        <dbReference type="ChEBI" id="CHEBI:18420"/>
        <label>1</label>
    </ligand>
</feature>
<feature type="binding site" evidence="1">
    <location>
        <position position="132"/>
    </location>
    <ligand>
        <name>Mg(2+)</name>
        <dbReference type="ChEBI" id="CHEBI:18420"/>
        <label>2</label>
    </ligand>
</feature>
<name>RNH_LEGPC</name>
<dbReference type="EC" id="3.1.26.4" evidence="1"/>
<dbReference type="EMBL" id="CP000675">
    <property type="protein sequence ID" value="ABQ54775.1"/>
    <property type="molecule type" value="Genomic_DNA"/>
</dbReference>
<dbReference type="RefSeq" id="WP_010947113.1">
    <property type="nucleotide sequence ID" value="NZ_JAPMSS010000002.1"/>
</dbReference>
<dbReference type="SMR" id="A5IBM5"/>
<dbReference type="GeneID" id="57035373"/>
<dbReference type="KEGG" id="lpc:LPC_0799"/>
<dbReference type="HOGENOM" id="CLU_030894_6_0_6"/>
<dbReference type="GO" id="GO:0005737">
    <property type="term" value="C:cytoplasm"/>
    <property type="evidence" value="ECO:0007669"/>
    <property type="project" value="UniProtKB-SubCell"/>
</dbReference>
<dbReference type="GO" id="GO:0000287">
    <property type="term" value="F:magnesium ion binding"/>
    <property type="evidence" value="ECO:0007669"/>
    <property type="project" value="UniProtKB-UniRule"/>
</dbReference>
<dbReference type="GO" id="GO:0003676">
    <property type="term" value="F:nucleic acid binding"/>
    <property type="evidence" value="ECO:0007669"/>
    <property type="project" value="InterPro"/>
</dbReference>
<dbReference type="GO" id="GO:0004523">
    <property type="term" value="F:RNA-DNA hybrid ribonuclease activity"/>
    <property type="evidence" value="ECO:0007669"/>
    <property type="project" value="UniProtKB-UniRule"/>
</dbReference>
<dbReference type="GO" id="GO:0043137">
    <property type="term" value="P:DNA replication, removal of RNA primer"/>
    <property type="evidence" value="ECO:0007669"/>
    <property type="project" value="TreeGrafter"/>
</dbReference>
<dbReference type="CDD" id="cd09278">
    <property type="entry name" value="RNase_HI_prokaryote_like"/>
    <property type="match status" value="1"/>
</dbReference>
<dbReference type="FunFam" id="3.30.420.10:FF:000089">
    <property type="entry name" value="Ribonuclease H"/>
    <property type="match status" value="1"/>
</dbReference>
<dbReference type="Gene3D" id="3.30.420.10">
    <property type="entry name" value="Ribonuclease H-like superfamily/Ribonuclease H"/>
    <property type="match status" value="1"/>
</dbReference>
<dbReference type="HAMAP" id="MF_00042">
    <property type="entry name" value="RNase_H"/>
    <property type="match status" value="1"/>
</dbReference>
<dbReference type="InterPro" id="IPR050092">
    <property type="entry name" value="RNase_H"/>
</dbReference>
<dbReference type="InterPro" id="IPR012337">
    <property type="entry name" value="RNaseH-like_sf"/>
</dbReference>
<dbReference type="InterPro" id="IPR002156">
    <property type="entry name" value="RNaseH_domain"/>
</dbReference>
<dbReference type="InterPro" id="IPR036397">
    <property type="entry name" value="RNaseH_sf"/>
</dbReference>
<dbReference type="InterPro" id="IPR022892">
    <property type="entry name" value="RNaseHI"/>
</dbReference>
<dbReference type="NCBIfam" id="NF001236">
    <property type="entry name" value="PRK00203.1"/>
    <property type="match status" value="1"/>
</dbReference>
<dbReference type="PANTHER" id="PTHR10642">
    <property type="entry name" value="RIBONUCLEASE H1"/>
    <property type="match status" value="1"/>
</dbReference>
<dbReference type="PANTHER" id="PTHR10642:SF26">
    <property type="entry name" value="RIBONUCLEASE H1"/>
    <property type="match status" value="1"/>
</dbReference>
<dbReference type="Pfam" id="PF00075">
    <property type="entry name" value="RNase_H"/>
    <property type="match status" value="1"/>
</dbReference>
<dbReference type="SUPFAM" id="SSF53098">
    <property type="entry name" value="Ribonuclease H-like"/>
    <property type="match status" value="1"/>
</dbReference>
<dbReference type="PROSITE" id="PS50879">
    <property type="entry name" value="RNASE_H_1"/>
    <property type="match status" value="1"/>
</dbReference>
<gene>
    <name evidence="1" type="primary">rnhA</name>
    <name type="ordered locus">LPC_0799</name>
</gene>
<evidence type="ECO:0000255" key="1">
    <source>
        <dbReference type="HAMAP-Rule" id="MF_00042"/>
    </source>
</evidence>
<evidence type="ECO:0000255" key="2">
    <source>
        <dbReference type="PROSITE-ProRule" id="PRU00408"/>
    </source>
</evidence>
<keyword id="KW-0963">Cytoplasm</keyword>
<keyword id="KW-0255">Endonuclease</keyword>
<keyword id="KW-0378">Hydrolase</keyword>
<keyword id="KW-0460">Magnesium</keyword>
<keyword id="KW-0479">Metal-binding</keyword>
<keyword id="KW-0540">Nuclease</keyword>
<protein>
    <recommendedName>
        <fullName evidence="1">Ribonuclease H</fullName>
        <shortName evidence="1">RNase H</shortName>
        <ecNumber evidence="1">3.1.26.4</ecNumber>
    </recommendedName>
</protein>
<organism>
    <name type="scientific">Legionella pneumophila (strain Corby)</name>
    <dbReference type="NCBI Taxonomy" id="400673"/>
    <lineage>
        <taxon>Bacteria</taxon>
        <taxon>Pseudomonadati</taxon>
        <taxon>Pseudomonadota</taxon>
        <taxon>Gammaproteobacteria</taxon>
        <taxon>Legionellales</taxon>
        <taxon>Legionellaceae</taxon>
        <taxon>Legionella</taxon>
    </lineage>
</organism>
<accession>A5IBM5</accession>
<comment type="function">
    <text evidence="1">Endonuclease that specifically degrades the RNA of RNA-DNA hybrids.</text>
</comment>
<comment type="catalytic activity">
    <reaction evidence="1">
        <text>Endonucleolytic cleavage to 5'-phosphomonoester.</text>
        <dbReference type="EC" id="3.1.26.4"/>
    </reaction>
</comment>
<comment type="cofactor">
    <cofactor evidence="1">
        <name>Mg(2+)</name>
        <dbReference type="ChEBI" id="CHEBI:18420"/>
    </cofactor>
    <text evidence="1">Binds 1 Mg(2+) ion per subunit. May bind a second metal ion at a regulatory site, or after substrate binding.</text>
</comment>
<comment type="subunit">
    <text evidence="1">Monomer.</text>
</comment>
<comment type="subcellular location">
    <subcellularLocation>
        <location evidence="1">Cytoplasm</location>
    </subcellularLocation>
</comment>
<comment type="similarity">
    <text evidence="1">Belongs to the RNase H family.</text>
</comment>
<reference key="1">
    <citation type="submission" date="2006-11" db="EMBL/GenBank/DDBJ databases">
        <title>Identification and characterization of a new conjugation/ type IVA secretion system (trb/tra) of L. pneumophila Corby localized on a mobile genomic island.</title>
        <authorList>
            <person name="Gloeckner G."/>
            <person name="Albert-Weissenberger C."/>
            <person name="Weinmann E."/>
            <person name="Jacobi S."/>
            <person name="Schunder E."/>
            <person name="Steinert M."/>
            <person name="Buchrieser C."/>
            <person name="Hacker J."/>
            <person name="Heuner K."/>
        </authorList>
    </citation>
    <scope>NUCLEOTIDE SEQUENCE [LARGE SCALE GENOMIC DNA]</scope>
    <source>
        <strain>Corby</strain>
    </source>
</reference>
<sequence length="143" mass="16252">MKVEIYTDGACKGNPGPGGWGVLLRYNGREKTLHGGEAQTTNNRMELMAAIKGLEALKRPCEVDLYTDSQYLQQGMKEWIKTWKRNGWRNSKKELVKNAELWKSLDNLASIHNIHWHWVKGHSGHLENDLVDALANLGIEELS</sequence>
<proteinExistence type="inferred from homology"/>